<gene>
    <name evidence="1" type="primary">rplC</name>
    <name type="ordered locus">HY04AAS1_0265</name>
</gene>
<feature type="chain" id="PRO_1000141877" description="Large ribosomal subunit protein uL3">
    <location>
        <begin position="1"/>
        <end position="232"/>
    </location>
</feature>
<name>RL3_HYDS0</name>
<comment type="function">
    <text evidence="1">One of the primary rRNA binding proteins, it binds directly near the 3'-end of the 23S rRNA, where it nucleates assembly of the 50S subunit.</text>
</comment>
<comment type="subunit">
    <text evidence="1">Part of the 50S ribosomal subunit. Forms a cluster with proteins L14 and L19.</text>
</comment>
<comment type="similarity">
    <text evidence="1">Belongs to the universal ribosomal protein uL3 family.</text>
</comment>
<dbReference type="EMBL" id="CP001130">
    <property type="protein sequence ID" value="ACG56955.1"/>
    <property type="molecule type" value="Genomic_DNA"/>
</dbReference>
<dbReference type="RefSeq" id="WP_012513311.1">
    <property type="nucleotide sequence ID" value="NC_011126.1"/>
</dbReference>
<dbReference type="SMR" id="B4U744"/>
<dbReference type="STRING" id="380749.HY04AAS1_0265"/>
<dbReference type="KEGG" id="hya:HY04AAS1_0265"/>
<dbReference type="eggNOG" id="COG0087">
    <property type="taxonomic scope" value="Bacteria"/>
</dbReference>
<dbReference type="HOGENOM" id="CLU_044142_4_1_0"/>
<dbReference type="OrthoDB" id="9806135at2"/>
<dbReference type="GO" id="GO:0022625">
    <property type="term" value="C:cytosolic large ribosomal subunit"/>
    <property type="evidence" value="ECO:0007669"/>
    <property type="project" value="TreeGrafter"/>
</dbReference>
<dbReference type="GO" id="GO:0019843">
    <property type="term" value="F:rRNA binding"/>
    <property type="evidence" value="ECO:0007669"/>
    <property type="project" value="UniProtKB-UniRule"/>
</dbReference>
<dbReference type="GO" id="GO:0003735">
    <property type="term" value="F:structural constituent of ribosome"/>
    <property type="evidence" value="ECO:0007669"/>
    <property type="project" value="InterPro"/>
</dbReference>
<dbReference type="GO" id="GO:0006412">
    <property type="term" value="P:translation"/>
    <property type="evidence" value="ECO:0007669"/>
    <property type="project" value="UniProtKB-UniRule"/>
</dbReference>
<dbReference type="FunFam" id="2.40.30.10:FF:000004">
    <property type="entry name" value="50S ribosomal protein L3"/>
    <property type="match status" value="1"/>
</dbReference>
<dbReference type="FunFam" id="3.30.160.810:FF:000001">
    <property type="entry name" value="50S ribosomal protein L3"/>
    <property type="match status" value="1"/>
</dbReference>
<dbReference type="Gene3D" id="3.30.160.810">
    <property type="match status" value="1"/>
</dbReference>
<dbReference type="Gene3D" id="2.40.30.10">
    <property type="entry name" value="Translation factors"/>
    <property type="match status" value="1"/>
</dbReference>
<dbReference type="HAMAP" id="MF_01325_B">
    <property type="entry name" value="Ribosomal_uL3_B"/>
    <property type="match status" value="1"/>
</dbReference>
<dbReference type="InterPro" id="IPR000597">
    <property type="entry name" value="Ribosomal_uL3"/>
</dbReference>
<dbReference type="InterPro" id="IPR019927">
    <property type="entry name" value="Ribosomal_uL3_bac/org-type"/>
</dbReference>
<dbReference type="InterPro" id="IPR019926">
    <property type="entry name" value="Ribosomal_uL3_CS"/>
</dbReference>
<dbReference type="InterPro" id="IPR009000">
    <property type="entry name" value="Transl_B-barrel_sf"/>
</dbReference>
<dbReference type="NCBIfam" id="TIGR03625">
    <property type="entry name" value="L3_bact"/>
    <property type="match status" value="1"/>
</dbReference>
<dbReference type="PANTHER" id="PTHR11229">
    <property type="entry name" value="50S RIBOSOMAL PROTEIN L3"/>
    <property type="match status" value="1"/>
</dbReference>
<dbReference type="PANTHER" id="PTHR11229:SF16">
    <property type="entry name" value="LARGE RIBOSOMAL SUBUNIT PROTEIN UL3C"/>
    <property type="match status" value="1"/>
</dbReference>
<dbReference type="Pfam" id="PF00297">
    <property type="entry name" value="Ribosomal_L3"/>
    <property type="match status" value="1"/>
</dbReference>
<dbReference type="SUPFAM" id="SSF50447">
    <property type="entry name" value="Translation proteins"/>
    <property type="match status" value="1"/>
</dbReference>
<dbReference type="PROSITE" id="PS00474">
    <property type="entry name" value="RIBOSOMAL_L3"/>
    <property type="match status" value="1"/>
</dbReference>
<evidence type="ECO:0000255" key="1">
    <source>
        <dbReference type="HAMAP-Rule" id="MF_01325"/>
    </source>
</evidence>
<evidence type="ECO:0000305" key="2"/>
<accession>B4U744</accession>
<protein>
    <recommendedName>
        <fullName evidence="1">Large ribosomal subunit protein uL3</fullName>
    </recommendedName>
    <alternativeName>
        <fullName evidence="2">50S ribosomal protein L3</fullName>
    </alternativeName>
</protein>
<organism>
    <name type="scientific">Hydrogenobaculum sp. (strain Y04AAS1)</name>
    <dbReference type="NCBI Taxonomy" id="380749"/>
    <lineage>
        <taxon>Bacteria</taxon>
        <taxon>Pseudomonadati</taxon>
        <taxon>Aquificota</taxon>
        <taxon>Aquificia</taxon>
        <taxon>Aquificales</taxon>
        <taxon>Aquificaceae</taxon>
        <taxon>Hydrogenobaculum</taxon>
    </lineage>
</organism>
<sequence length="232" mass="25843">MIGLIGKKLGMMRVFLNDGTAIPVTAIKVEPNYVVYIKSSETDGYNAIQVGSIPLKQSRFKKPMVGHFKKANLTPLKYLKEFRVDDVSSFALGQELGVDIFSPGELVDIVGRSKGRGFTGTMKRWDFGGFPKSHGHRYHRAVGSVGNRTDPGRVWKSKRMAGRHGNETIRVQALVVVDVLKDKGIILVNGSVPGHKDGIVYIEKSHIAFRKKAQRKQDRLSFIPSNLLRQEV</sequence>
<keyword id="KW-0687">Ribonucleoprotein</keyword>
<keyword id="KW-0689">Ribosomal protein</keyword>
<keyword id="KW-0694">RNA-binding</keyword>
<keyword id="KW-0699">rRNA-binding</keyword>
<reference key="1">
    <citation type="journal article" date="2009" name="J. Bacteriol.">
        <title>Complete and draft genome sequences of six members of the Aquificales.</title>
        <authorList>
            <person name="Reysenbach A.-L."/>
            <person name="Hamamura N."/>
            <person name="Podar M."/>
            <person name="Griffiths E."/>
            <person name="Ferreira S."/>
            <person name="Hochstein R."/>
            <person name="Heidelberg J."/>
            <person name="Johnson J."/>
            <person name="Mead D."/>
            <person name="Pohorille A."/>
            <person name="Sarmiento M."/>
            <person name="Schweighofer K."/>
            <person name="Seshadri R."/>
            <person name="Voytek M.A."/>
        </authorList>
    </citation>
    <scope>NUCLEOTIDE SEQUENCE [LARGE SCALE GENOMIC DNA]</scope>
    <source>
        <strain>Y04AAS1</strain>
    </source>
</reference>
<proteinExistence type="inferred from homology"/>